<dbReference type="EC" id="6.3.4.5" evidence="1"/>
<dbReference type="EMBL" id="CP000872">
    <property type="protein sequence ID" value="ABX61178.1"/>
    <property type="molecule type" value="Genomic_DNA"/>
</dbReference>
<dbReference type="RefSeq" id="WP_002965322.1">
    <property type="nucleotide sequence ID" value="NC_010103.1"/>
</dbReference>
<dbReference type="SMR" id="A9M6S7"/>
<dbReference type="KEGG" id="bcs:BCAN_A0075"/>
<dbReference type="HOGENOM" id="CLU_032784_4_2_5"/>
<dbReference type="PhylomeDB" id="A9M6S7"/>
<dbReference type="UniPathway" id="UPA00068">
    <property type="reaction ID" value="UER00113"/>
</dbReference>
<dbReference type="Proteomes" id="UP000001385">
    <property type="component" value="Chromosome I"/>
</dbReference>
<dbReference type="GO" id="GO:0005737">
    <property type="term" value="C:cytoplasm"/>
    <property type="evidence" value="ECO:0007669"/>
    <property type="project" value="UniProtKB-SubCell"/>
</dbReference>
<dbReference type="GO" id="GO:0004055">
    <property type="term" value="F:argininosuccinate synthase activity"/>
    <property type="evidence" value="ECO:0007669"/>
    <property type="project" value="UniProtKB-UniRule"/>
</dbReference>
<dbReference type="GO" id="GO:0005524">
    <property type="term" value="F:ATP binding"/>
    <property type="evidence" value="ECO:0007669"/>
    <property type="project" value="UniProtKB-UniRule"/>
</dbReference>
<dbReference type="GO" id="GO:0000053">
    <property type="term" value="P:argininosuccinate metabolic process"/>
    <property type="evidence" value="ECO:0007669"/>
    <property type="project" value="TreeGrafter"/>
</dbReference>
<dbReference type="GO" id="GO:0006526">
    <property type="term" value="P:L-arginine biosynthetic process"/>
    <property type="evidence" value="ECO:0007669"/>
    <property type="project" value="UniProtKB-UniRule"/>
</dbReference>
<dbReference type="GO" id="GO:0000050">
    <property type="term" value="P:urea cycle"/>
    <property type="evidence" value="ECO:0007669"/>
    <property type="project" value="TreeGrafter"/>
</dbReference>
<dbReference type="CDD" id="cd01999">
    <property type="entry name" value="ASS"/>
    <property type="match status" value="1"/>
</dbReference>
<dbReference type="FunFam" id="3.40.50.620:FF:000019">
    <property type="entry name" value="Argininosuccinate synthase"/>
    <property type="match status" value="1"/>
</dbReference>
<dbReference type="FunFam" id="3.90.1260.10:FF:000007">
    <property type="entry name" value="Argininosuccinate synthase"/>
    <property type="match status" value="1"/>
</dbReference>
<dbReference type="Gene3D" id="3.90.1260.10">
    <property type="entry name" value="Argininosuccinate synthetase, chain A, domain 2"/>
    <property type="match status" value="1"/>
</dbReference>
<dbReference type="Gene3D" id="3.40.50.620">
    <property type="entry name" value="HUPs"/>
    <property type="match status" value="1"/>
</dbReference>
<dbReference type="Gene3D" id="1.20.5.470">
    <property type="entry name" value="Single helix bin"/>
    <property type="match status" value="1"/>
</dbReference>
<dbReference type="HAMAP" id="MF_00005">
    <property type="entry name" value="Arg_succ_synth_type1"/>
    <property type="match status" value="1"/>
</dbReference>
<dbReference type="InterPro" id="IPR048268">
    <property type="entry name" value="Arginosuc_syn_C"/>
</dbReference>
<dbReference type="InterPro" id="IPR048267">
    <property type="entry name" value="Arginosuc_syn_N"/>
</dbReference>
<dbReference type="InterPro" id="IPR001518">
    <property type="entry name" value="Arginosuc_synth"/>
</dbReference>
<dbReference type="InterPro" id="IPR018223">
    <property type="entry name" value="Arginosuc_synth_CS"/>
</dbReference>
<dbReference type="InterPro" id="IPR023434">
    <property type="entry name" value="Arginosuc_synth_type_1_subfam"/>
</dbReference>
<dbReference type="InterPro" id="IPR024074">
    <property type="entry name" value="AS_cat/multimer_dom_body"/>
</dbReference>
<dbReference type="InterPro" id="IPR014729">
    <property type="entry name" value="Rossmann-like_a/b/a_fold"/>
</dbReference>
<dbReference type="NCBIfam" id="TIGR00032">
    <property type="entry name" value="argG"/>
    <property type="match status" value="1"/>
</dbReference>
<dbReference type="NCBIfam" id="NF001770">
    <property type="entry name" value="PRK00509.1"/>
    <property type="match status" value="1"/>
</dbReference>
<dbReference type="PANTHER" id="PTHR11587">
    <property type="entry name" value="ARGININOSUCCINATE SYNTHASE"/>
    <property type="match status" value="1"/>
</dbReference>
<dbReference type="PANTHER" id="PTHR11587:SF2">
    <property type="entry name" value="ARGININOSUCCINATE SYNTHASE"/>
    <property type="match status" value="1"/>
</dbReference>
<dbReference type="Pfam" id="PF20979">
    <property type="entry name" value="Arginosuc_syn_C"/>
    <property type="match status" value="1"/>
</dbReference>
<dbReference type="Pfam" id="PF00764">
    <property type="entry name" value="Arginosuc_synth"/>
    <property type="match status" value="1"/>
</dbReference>
<dbReference type="SUPFAM" id="SSF52402">
    <property type="entry name" value="Adenine nucleotide alpha hydrolases-like"/>
    <property type="match status" value="1"/>
</dbReference>
<dbReference type="SUPFAM" id="SSF69864">
    <property type="entry name" value="Argininosuccinate synthetase, C-terminal domain"/>
    <property type="match status" value="1"/>
</dbReference>
<dbReference type="PROSITE" id="PS00564">
    <property type="entry name" value="ARGININOSUCCIN_SYN_1"/>
    <property type="match status" value="1"/>
</dbReference>
<dbReference type="PROSITE" id="PS00565">
    <property type="entry name" value="ARGININOSUCCIN_SYN_2"/>
    <property type="match status" value="1"/>
</dbReference>
<protein>
    <recommendedName>
        <fullName evidence="1">Argininosuccinate synthase</fullName>
        <ecNumber evidence="1">6.3.4.5</ecNumber>
    </recommendedName>
    <alternativeName>
        <fullName evidence="1">Citrulline--aspartate ligase</fullName>
    </alternativeName>
</protein>
<sequence>MSKWKDVKKVVLAYSGGLDTSIILKWLQTELGAEVVTFTADLGQGEELEPARKKAEMLGIKEIFIEDVREEFVRDFVFPMFRANAVYEGVYLLGTSIARPLISKHLIDIAKKTGADAIAHGATGKGNDQVRFELSAYALNPDIKIIAPWRDWSFKSRTQLLEFAEQHQIPVAKDKKGEAPFSVDANLLHSSSEGKVLEDPSQEAPEYVHMRTISPETAPDKATIIKIGFEKGDAVSINGERLSPATLLAKLNDYGRDNGIGRLDLVENRFVGMKSRGVYETPGGTILLAAHRAIESITLDRGAAHLKDELMPRYAELIYYGFWFSPEREMLQAAIDHSQRHVEGEVTLKLYKGNVMVIGRESAKSLYSDKLVTFEDDQGAYDQKDAAGFIKLNALRLRTLAARDRK</sequence>
<feature type="chain" id="PRO_1000073813" description="Argininosuccinate synthase">
    <location>
        <begin position="1"/>
        <end position="406"/>
    </location>
</feature>
<feature type="binding site" evidence="1">
    <location>
        <begin position="13"/>
        <end position="21"/>
    </location>
    <ligand>
        <name>ATP</name>
        <dbReference type="ChEBI" id="CHEBI:30616"/>
    </ligand>
</feature>
<feature type="binding site" evidence="1">
    <location>
        <position position="40"/>
    </location>
    <ligand>
        <name>ATP</name>
        <dbReference type="ChEBI" id="CHEBI:30616"/>
    </ligand>
</feature>
<feature type="binding site" evidence="1">
    <location>
        <position position="91"/>
    </location>
    <ligand>
        <name>L-citrulline</name>
        <dbReference type="ChEBI" id="CHEBI:57743"/>
    </ligand>
</feature>
<feature type="binding site" evidence="1">
    <location>
        <position position="96"/>
    </location>
    <ligand>
        <name>L-citrulline</name>
        <dbReference type="ChEBI" id="CHEBI:57743"/>
    </ligand>
</feature>
<feature type="binding site" evidence="1">
    <location>
        <position position="121"/>
    </location>
    <ligand>
        <name>ATP</name>
        <dbReference type="ChEBI" id="CHEBI:30616"/>
    </ligand>
</feature>
<feature type="binding site" evidence="1">
    <location>
        <position position="123"/>
    </location>
    <ligand>
        <name>L-aspartate</name>
        <dbReference type="ChEBI" id="CHEBI:29991"/>
    </ligand>
</feature>
<feature type="binding site" evidence="1">
    <location>
        <position position="127"/>
    </location>
    <ligand>
        <name>L-aspartate</name>
        <dbReference type="ChEBI" id="CHEBI:29991"/>
    </ligand>
</feature>
<feature type="binding site" evidence="1">
    <location>
        <position position="127"/>
    </location>
    <ligand>
        <name>L-citrulline</name>
        <dbReference type="ChEBI" id="CHEBI:57743"/>
    </ligand>
</feature>
<feature type="binding site" evidence="1">
    <location>
        <position position="128"/>
    </location>
    <ligand>
        <name>L-aspartate</name>
        <dbReference type="ChEBI" id="CHEBI:29991"/>
    </ligand>
</feature>
<feature type="binding site" evidence="1">
    <location>
        <position position="131"/>
    </location>
    <ligand>
        <name>L-citrulline</name>
        <dbReference type="ChEBI" id="CHEBI:57743"/>
    </ligand>
</feature>
<feature type="binding site" evidence="1">
    <location>
        <position position="182"/>
    </location>
    <ligand>
        <name>L-citrulline</name>
        <dbReference type="ChEBI" id="CHEBI:57743"/>
    </ligand>
</feature>
<feature type="binding site" evidence="1">
    <location>
        <position position="191"/>
    </location>
    <ligand>
        <name>L-citrulline</name>
        <dbReference type="ChEBI" id="CHEBI:57743"/>
    </ligand>
</feature>
<feature type="binding site" evidence="1">
    <location>
        <position position="267"/>
    </location>
    <ligand>
        <name>L-citrulline</name>
        <dbReference type="ChEBI" id="CHEBI:57743"/>
    </ligand>
</feature>
<feature type="binding site" evidence="1">
    <location>
        <position position="279"/>
    </location>
    <ligand>
        <name>L-citrulline</name>
        <dbReference type="ChEBI" id="CHEBI:57743"/>
    </ligand>
</feature>
<keyword id="KW-0028">Amino-acid biosynthesis</keyword>
<keyword id="KW-0055">Arginine biosynthesis</keyword>
<keyword id="KW-0067">ATP-binding</keyword>
<keyword id="KW-0963">Cytoplasm</keyword>
<keyword id="KW-0436">Ligase</keyword>
<keyword id="KW-0547">Nucleotide-binding</keyword>
<keyword id="KW-1185">Reference proteome</keyword>
<accession>A9M6S7</accession>
<reference key="1">
    <citation type="submission" date="2007-10" db="EMBL/GenBank/DDBJ databases">
        <title>Brucella canis ATCC 23365 whole genome shotgun sequencing project.</title>
        <authorList>
            <person name="Setubal J.C."/>
            <person name="Bowns C."/>
            <person name="Boyle S."/>
            <person name="Crasta O.R."/>
            <person name="Czar M.J."/>
            <person name="Dharmanolla C."/>
            <person name="Gillespie J.J."/>
            <person name="Kenyon R.W."/>
            <person name="Lu J."/>
            <person name="Mane S."/>
            <person name="Mohapatra S."/>
            <person name="Nagrani S."/>
            <person name="Purkayastha A."/>
            <person name="Rajasimha H.K."/>
            <person name="Shallom J.M."/>
            <person name="Shallom S."/>
            <person name="Shukla M."/>
            <person name="Snyder E.E."/>
            <person name="Sobral B.W."/>
            <person name="Wattam A.R."/>
            <person name="Will R."/>
            <person name="Williams K."/>
            <person name="Yoo H."/>
            <person name="Bruce D."/>
            <person name="Detter C."/>
            <person name="Munk C."/>
            <person name="Brettin T.S."/>
        </authorList>
    </citation>
    <scope>NUCLEOTIDE SEQUENCE [LARGE SCALE GENOMIC DNA]</scope>
    <source>
        <strain>ATCC 23365 / NCTC 10854 / RM-666</strain>
    </source>
</reference>
<organism>
    <name type="scientific">Brucella canis (strain ATCC 23365 / NCTC 10854 / RM-666)</name>
    <dbReference type="NCBI Taxonomy" id="483179"/>
    <lineage>
        <taxon>Bacteria</taxon>
        <taxon>Pseudomonadati</taxon>
        <taxon>Pseudomonadota</taxon>
        <taxon>Alphaproteobacteria</taxon>
        <taxon>Hyphomicrobiales</taxon>
        <taxon>Brucellaceae</taxon>
        <taxon>Brucella/Ochrobactrum group</taxon>
        <taxon>Brucella</taxon>
    </lineage>
</organism>
<gene>
    <name evidence="1" type="primary">argG</name>
    <name type="ordered locus">BCAN_A0075</name>
</gene>
<comment type="catalytic activity">
    <reaction evidence="1">
        <text>L-citrulline + L-aspartate + ATP = 2-(N(omega)-L-arginino)succinate + AMP + diphosphate + H(+)</text>
        <dbReference type="Rhea" id="RHEA:10932"/>
        <dbReference type="ChEBI" id="CHEBI:15378"/>
        <dbReference type="ChEBI" id="CHEBI:29991"/>
        <dbReference type="ChEBI" id="CHEBI:30616"/>
        <dbReference type="ChEBI" id="CHEBI:33019"/>
        <dbReference type="ChEBI" id="CHEBI:57472"/>
        <dbReference type="ChEBI" id="CHEBI:57743"/>
        <dbReference type="ChEBI" id="CHEBI:456215"/>
        <dbReference type="EC" id="6.3.4.5"/>
    </reaction>
</comment>
<comment type="pathway">
    <text evidence="1">Amino-acid biosynthesis; L-arginine biosynthesis; L-arginine from L-ornithine and carbamoyl phosphate: step 2/3.</text>
</comment>
<comment type="subunit">
    <text evidence="1">Homotetramer.</text>
</comment>
<comment type="subcellular location">
    <subcellularLocation>
        <location evidence="1">Cytoplasm</location>
    </subcellularLocation>
</comment>
<comment type="similarity">
    <text evidence="1">Belongs to the argininosuccinate synthase family. Type 1 subfamily.</text>
</comment>
<proteinExistence type="inferred from homology"/>
<name>ASSY_BRUC2</name>
<evidence type="ECO:0000255" key="1">
    <source>
        <dbReference type="HAMAP-Rule" id="MF_00005"/>
    </source>
</evidence>